<gene>
    <name type="primary">Btg1</name>
</gene>
<feature type="chain" id="PRO_0000143802" description="Protein BTG1">
    <location>
        <begin position="1"/>
        <end position="171"/>
    </location>
</feature>
<feature type="modified residue" description="Phosphoserine" evidence="2">
    <location>
        <position position="159"/>
    </location>
</feature>
<keyword id="KW-0597">Phosphoprotein</keyword>
<keyword id="KW-1185">Reference proteome</keyword>
<accession>Q63073</accession>
<comment type="function">
    <text>Anti-proliferative protein.</text>
</comment>
<comment type="subunit">
    <text evidence="1">Interacts with CNOT7 and CNOT8.</text>
</comment>
<comment type="similarity">
    <text evidence="3">Belongs to the BTG family.</text>
</comment>
<dbReference type="EMBL" id="L26268">
    <property type="protein sequence ID" value="AAA85779.1"/>
    <property type="molecule type" value="mRNA"/>
</dbReference>
<dbReference type="RefSeq" id="NP_058954.1">
    <property type="nucleotide sequence ID" value="NM_017258.2"/>
</dbReference>
<dbReference type="SMR" id="Q63073"/>
<dbReference type="FunCoup" id="Q63073">
    <property type="interactions" value="841"/>
</dbReference>
<dbReference type="IntAct" id="Q63073">
    <property type="interactions" value="1"/>
</dbReference>
<dbReference type="STRING" id="10116.ENSRNOP00000005910"/>
<dbReference type="PhosphoSitePlus" id="Q63073"/>
<dbReference type="PaxDb" id="10116-ENSRNOP00000005910"/>
<dbReference type="Ensembl" id="ENSRNOT00000005910.5">
    <property type="protein sequence ID" value="ENSRNOP00000005910.3"/>
    <property type="gene ID" value="ENSRNOG00000004284.5"/>
</dbReference>
<dbReference type="GeneID" id="29618"/>
<dbReference type="KEGG" id="rno:29618"/>
<dbReference type="UCSC" id="RGD:2224">
    <property type="organism name" value="rat"/>
</dbReference>
<dbReference type="AGR" id="RGD:2224"/>
<dbReference type="CTD" id="694"/>
<dbReference type="RGD" id="2224">
    <property type="gene designation" value="Btg1"/>
</dbReference>
<dbReference type="eggNOG" id="KOG4006">
    <property type="taxonomic scope" value="Eukaryota"/>
</dbReference>
<dbReference type="GeneTree" id="ENSGT00950000182952"/>
<dbReference type="HOGENOM" id="CLU_079660_4_0_1"/>
<dbReference type="InParanoid" id="Q63073"/>
<dbReference type="OMA" id="SHWFPDK"/>
<dbReference type="OrthoDB" id="19928at2759"/>
<dbReference type="PhylomeDB" id="Q63073"/>
<dbReference type="TreeFam" id="TF105272"/>
<dbReference type="PRO" id="PR:Q63073"/>
<dbReference type="Proteomes" id="UP000002494">
    <property type="component" value="Chromosome 7"/>
</dbReference>
<dbReference type="Bgee" id="ENSRNOG00000004284">
    <property type="expression patterns" value="Expressed in thymus and 20 other cell types or tissues"/>
</dbReference>
<dbReference type="GO" id="GO:0005737">
    <property type="term" value="C:cytoplasm"/>
    <property type="evidence" value="ECO:0000250"/>
    <property type="project" value="UniProtKB"/>
</dbReference>
<dbReference type="GO" id="GO:0005634">
    <property type="term" value="C:nucleus"/>
    <property type="evidence" value="ECO:0000250"/>
    <property type="project" value="UniProtKB"/>
</dbReference>
<dbReference type="GO" id="GO:0019899">
    <property type="term" value="F:enzyme binding"/>
    <property type="evidence" value="ECO:0000250"/>
    <property type="project" value="UniProtKB"/>
</dbReference>
<dbReference type="GO" id="GO:0008283">
    <property type="term" value="P:cell population proliferation"/>
    <property type="evidence" value="ECO:0000266"/>
    <property type="project" value="RGD"/>
</dbReference>
<dbReference type="GO" id="GO:0008285">
    <property type="term" value="P:negative regulation of cell population proliferation"/>
    <property type="evidence" value="ECO:0000250"/>
    <property type="project" value="UniProtKB"/>
</dbReference>
<dbReference type="GO" id="GO:0045766">
    <property type="term" value="P:positive regulation of angiogenesis"/>
    <property type="evidence" value="ECO:0000250"/>
    <property type="project" value="UniProtKB"/>
</dbReference>
<dbReference type="GO" id="GO:0045603">
    <property type="term" value="P:positive regulation of endothelial cell differentiation"/>
    <property type="evidence" value="ECO:0000250"/>
    <property type="project" value="UniProtKB"/>
</dbReference>
<dbReference type="GO" id="GO:2000271">
    <property type="term" value="P:positive regulation of fibroblast apoptotic process"/>
    <property type="evidence" value="ECO:0000250"/>
    <property type="project" value="UniProtKB"/>
</dbReference>
<dbReference type="GO" id="GO:0045663">
    <property type="term" value="P:positive regulation of myoblast differentiation"/>
    <property type="evidence" value="ECO:0000266"/>
    <property type="project" value="RGD"/>
</dbReference>
<dbReference type="GO" id="GO:0006979">
    <property type="term" value="P:response to oxidative stress"/>
    <property type="evidence" value="ECO:0000270"/>
    <property type="project" value="RGD"/>
</dbReference>
<dbReference type="GO" id="GO:0043434">
    <property type="term" value="P:response to peptide hormone"/>
    <property type="evidence" value="ECO:0000270"/>
    <property type="project" value="RGD"/>
</dbReference>
<dbReference type="GO" id="GO:0007286">
    <property type="term" value="P:spermatid development"/>
    <property type="evidence" value="ECO:0000303"/>
    <property type="project" value="UniProtKB"/>
</dbReference>
<dbReference type="GO" id="GO:0007283">
    <property type="term" value="P:spermatogenesis"/>
    <property type="evidence" value="ECO:0000270"/>
    <property type="project" value="RGD"/>
</dbReference>
<dbReference type="FunFam" id="3.90.640.90:FF:000003">
    <property type="entry name" value="BTG1 isoform 1"/>
    <property type="match status" value="1"/>
</dbReference>
<dbReference type="Gene3D" id="3.90.640.90">
    <property type="entry name" value="Anti-proliferative protein, N-terminal domain"/>
    <property type="match status" value="1"/>
</dbReference>
<dbReference type="InterPro" id="IPR002087">
    <property type="entry name" value="Anti_prolifrtn"/>
</dbReference>
<dbReference type="InterPro" id="IPR033332">
    <property type="entry name" value="BTG"/>
</dbReference>
<dbReference type="InterPro" id="IPR036054">
    <property type="entry name" value="BTG-like_sf"/>
</dbReference>
<dbReference type="PANTHER" id="PTHR22978">
    <property type="entry name" value="B-CELL TRANSLOCATION GENE"/>
    <property type="match status" value="1"/>
</dbReference>
<dbReference type="PANTHER" id="PTHR22978:SF30">
    <property type="entry name" value="PROTEIN BTG1"/>
    <property type="match status" value="1"/>
</dbReference>
<dbReference type="Pfam" id="PF07742">
    <property type="entry name" value="BTG"/>
    <property type="match status" value="1"/>
</dbReference>
<dbReference type="PRINTS" id="PR00310">
    <property type="entry name" value="ANTIPRLFBTG1"/>
</dbReference>
<dbReference type="SMART" id="SM00099">
    <property type="entry name" value="btg1"/>
    <property type="match status" value="1"/>
</dbReference>
<dbReference type="SUPFAM" id="SSF160696">
    <property type="entry name" value="BTG domain-like"/>
    <property type="match status" value="1"/>
</dbReference>
<dbReference type="PROSITE" id="PS00960">
    <property type="entry name" value="BTG_1"/>
    <property type="match status" value="1"/>
</dbReference>
<dbReference type="PROSITE" id="PS01203">
    <property type="entry name" value="BTG_2"/>
    <property type="match status" value="1"/>
</dbReference>
<proteinExistence type="evidence at transcript level"/>
<evidence type="ECO:0000250" key="1"/>
<evidence type="ECO:0000250" key="2">
    <source>
        <dbReference type="UniProtKB" id="P62324"/>
    </source>
</evidence>
<evidence type="ECO:0000305" key="3"/>
<organism>
    <name type="scientific">Rattus norvegicus</name>
    <name type="common">Rat</name>
    <dbReference type="NCBI Taxonomy" id="10116"/>
    <lineage>
        <taxon>Eukaryota</taxon>
        <taxon>Metazoa</taxon>
        <taxon>Chordata</taxon>
        <taxon>Craniata</taxon>
        <taxon>Vertebrata</taxon>
        <taxon>Euteleostomi</taxon>
        <taxon>Mammalia</taxon>
        <taxon>Eutheria</taxon>
        <taxon>Euarchontoglires</taxon>
        <taxon>Glires</taxon>
        <taxon>Rodentia</taxon>
        <taxon>Myomorpha</taxon>
        <taxon>Muroidea</taxon>
        <taxon>Muridae</taxon>
        <taxon>Murinae</taxon>
        <taxon>Rattus</taxon>
    </lineage>
</organism>
<name>BTG1_RAT</name>
<reference key="1">
    <citation type="journal article" date="1995" name="Endocrinology">
        <title>Stage-specific expression of B cell translocation gene 1 in rat testis.</title>
        <authorList>
            <person name="Raburn D.J."/>
            <person name="Hamil K.G."/>
            <person name="Tsuruta J.K."/>
            <person name="O'Brien D.A."/>
            <person name="Hall S.H."/>
        </authorList>
    </citation>
    <scope>NUCLEOTIDE SEQUENCE [MRNA]</scope>
    <source>
        <strain>Sprague-Dawley</strain>
        <tissue>Testis</tissue>
    </source>
</reference>
<sequence length="171" mass="19195">MHPFYTRAATMIGEIAAAVSFISKFLRTKGLTSERQLQTFSQSLQELLAEHYKHHWFPEKPCKGSGYRCIRINHKMDPLIGQAAQRIGLSSQELFRLLPSELTLWVDPYEVSYRIGEDGSICVLYEASPAGGSSQNSTNVQMVDSRISCKEELLLGRTSPSKNYNMMTVSG</sequence>
<protein>
    <recommendedName>
        <fullName>Protein BTG1</fullName>
    </recommendedName>
    <alternativeName>
        <fullName>Anti-proliferative factor</fullName>
    </alternativeName>
    <alternativeName>
        <fullName>B-cell translocation gene 1 protein</fullName>
    </alternativeName>
</protein>